<sequence>MGQKVHPIGMRVGIIRDWDAKWYAEKEYADYLHEDLAIRKFVQKELADAAVSTIEIERAVNKVNVSLHTAKPGMVIGKGGANVDALRAKLNKLTGKQVHINIIEIKQPDLDAHLVGEGIARQLEQRVAFRRAQKQAIQRAMRAGAKGIKTQVSGRLNGADIARAEGYSEGTVPLHTLRADIDYAWEEADTTYGKLGVKVWIYRGEVLPARKNTKGGK</sequence>
<name>RS3_STRP7</name>
<dbReference type="EMBL" id="CP000918">
    <property type="protein sequence ID" value="ACO16773.1"/>
    <property type="molecule type" value="Genomic_DNA"/>
</dbReference>
<dbReference type="RefSeq" id="WP_000529936.1">
    <property type="nucleotide sequence ID" value="NC_012468.1"/>
</dbReference>
<dbReference type="SMR" id="C1CAL8"/>
<dbReference type="GeneID" id="49600535"/>
<dbReference type="KEGG" id="snm:SP70585_0271"/>
<dbReference type="HOGENOM" id="CLU_058591_0_2_9"/>
<dbReference type="Proteomes" id="UP000002211">
    <property type="component" value="Chromosome"/>
</dbReference>
<dbReference type="GO" id="GO:0022627">
    <property type="term" value="C:cytosolic small ribosomal subunit"/>
    <property type="evidence" value="ECO:0007669"/>
    <property type="project" value="TreeGrafter"/>
</dbReference>
<dbReference type="GO" id="GO:0003729">
    <property type="term" value="F:mRNA binding"/>
    <property type="evidence" value="ECO:0007669"/>
    <property type="project" value="UniProtKB-UniRule"/>
</dbReference>
<dbReference type="GO" id="GO:0019843">
    <property type="term" value="F:rRNA binding"/>
    <property type="evidence" value="ECO:0007669"/>
    <property type="project" value="UniProtKB-UniRule"/>
</dbReference>
<dbReference type="GO" id="GO:0003735">
    <property type="term" value="F:structural constituent of ribosome"/>
    <property type="evidence" value="ECO:0007669"/>
    <property type="project" value="InterPro"/>
</dbReference>
<dbReference type="GO" id="GO:0006412">
    <property type="term" value="P:translation"/>
    <property type="evidence" value="ECO:0007669"/>
    <property type="project" value="UniProtKB-UniRule"/>
</dbReference>
<dbReference type="CDD" id="cd02412">
    <property type="entry name" value="KH-II_30S_S3"/>
    <property type="match status" value="1"/>
</dbReference>
<dbReference type="FunFam" id="3.30.1140.32:FF:000001">
    <property type="entry name" value="30S ribosomal protein S3"/>
    <property type="match status" value="1"/>
</dbReference>
<dbReference type="FunFam" id="3.30.300.20:FF:000001">
    <property type="entry name" value="30S ribosomal protein S3"/>
    <property type="match status" value="1"/>
</dbReference>
<dbReference type="Gene3D" id="3.30.300.20">
    <property type="match status" value="1"/>
</dbReference>
<dbReference type="Gene3D" id="3.30.1140.32">
    <property type="entry name" value="Ribosomal protein S3, C-terminal domain"/>
    <property type="match status" value="1"/>
</dbReference>
<dbReference type="HAMAP" id="MF_01309_B">
    <property type="entry name" value="Ribosomal_uS3_B"/>
    <property type="match status" value="1"/>
</dbReference>
<dbReference type="InterPro" id="IPR004087">
    <property type="entry name" value="KH_dom"/>
</dbReference>
<dbReference type="InterPro" id="IPR015946">
    <property type="entry name" value="KH_dom-like_a/b"/>
</dbReference>
<dbReference type="InterPro" id="IPR004044">
    <property type="entry name" value="KH_dom_type_2"/>
</dbReference>
<dbReference type="InterPro" id="IPR009019">
    <property type="entry name" value="KH_sf_prok-type"/>
</dbReference>
<dbReference type="InterPro" id="IPR036419">
    <property type="entry name" value="Ribosomal_S3_C_sf"/>
</dbReference>
<dbReference type="InterPro" id="IPR005704">
    <property type="entry name" value="Ribosomal_uS3_bac-typ"/>
</dbReference>
<dbReference type="InterPro" id="IPR001351">
    <property type="entry name" value="Ribosomal_uS3_C"/>
</dbReference>
<dbReference type="InterPro" id="IPR018280">
    <property type="entry name" value="Ribosomal_uS3_CS"/>
</dbReference>
<dbReference type="NCBIfam" id="TIGR01009">
    <property type="entry name" value="rpsC_bact"/>
    <property type="match status" value="1"/>
</dbReference>
<dbReference type="PANTHER" id="PTHR11760">
    <property type="entry name" value="30S/40S RIBOSOMAL PROTEIN S3"/>
    <property type="match status" value="1"/>
</dbReference>
<dbReference type="PANTHER" id="PTHR11760:SF19">
    <property type="entry name" value="SMALL RIBOSOMAL SUBUNIT PROTEIN US3C"/>
    <property type="match status" value="1"/>
</dbReference>
<dbReference type="Pfam" id="PF07650">
    <property type="entry name" value="KH_2"/>
    <property type="match status" value="1"/>
</dbReference>
<dbReference type="Pfam" id="PF00189">
    <property type="entry name" value="Ribosomal_S3_C"/>
    <property type="match status" value="1"/>
</dbReference>
<dbReference type="SMART" id="SM00322">
    <property type="entry name" value="KH"/>
    <property type="match status" value="1"/>
</dbReference>
<dbReference type="SUPFAM" id="SSF54814">
    <property type="entry name" value="Prokaryotic type KH domain (KH-domain type II)"/>
    <property type="match status" value="1"/>
</dbReference>
<dbReference type="SUPFAM" id="SSF54821">
    <property type="entry name" value="Ribosomal protein S3 C-terminal domain"/>
    <property type="match status" value="1"/>
</dbReference>
<dbReference type="PROSITE" id="PS50823">
    <property type="entry name" value="KH_TYPE_2"/>
    <property type="match status" value="1"/>
</dbReference>
<dbReference type="PROSITE" id="PS00548">
    <property type="entry name" value="RIBOSOMAL_S3"/>
    <property type="match status" value="1"/>
</dbReference>
<evidence type="ECO:0000255" key="1">
    <source>
        <dbReference type="HAMAP-Rule" id="MF_01309"/>
    </source>
</evidence>
<evidence type="ECO:0000305" key="2"/>
<reference key="1">
    <citation type="journal article" date="2010" name="Genome Biol.">
        <title>Structure and dynamics of the pan-genome of Streptococcus pneumoniae and closely related species.</title>
        <authorList>
            <person name="Donati C."/>
            <person name="Hiller N.L."/>
            <person name="Tettelin H."/>
            <person name="Muzzi A."/>
            <person name="Croucher N.J."/>
            <person name="Angiuoli S.V."/>
            <person name="Oggioni M."/>
            <person name="Dunning Hotopp J.C."/>
            <person name="Hu F.Z."/>
            <person name="Riley D.R."/>
            <person name="Covacci A."/>
            <person name="Mitchell T.J."/>
            <person name="Bentley S.D."/>
            <person name="Kilian M."/>
            <person name="Ehrlich G.D."/>
            <person name="Rappuoli R."/>
            <person name="Moxon E.R."/>
            <person name="Masignani V."/>
        </authorList>
    </citation>
    <scope>NUCLEOTIDE SEQUENCE [LARGE SCALE GENOMIC DNA]</scope>
    <source>
        <strain>70585</strain>
    </source>
</reference>
<keyword id="KW-0687">Ribonucleoprotein</keyword>
<keyword id="KW-0689">Ribosomal protein</keyword>
<keyword id="KW-0694">RNA-binding</keyword>
<keyword id="KW-0699">rRNA-binding</keyword>
<accession>C1CAL8</accession>
<protein>
    <recommendedName>
        <fullName evidence="1">Small ribosomal subunit protein uS3</fullName>
    </recommendedName>
    <alternativeName>
        <fullName evidence="2">30S ribosomal protein S3</fullName>
    </alternativeName>
</protein>
<comment type="function">
    <text evidence="1">Binds the lower part of the 30S subunit head. Binds mRNA in the 70S ribosome, positioning it for translation.</text>
</comment>
<comment type="subunit">
    <text evidence="1">Part of the 30S ribosomal subunit. Forms a tight complex with proteins S10 and S14.</text>
</comment>
<comment type="similarity">
    <text evidence="1">Belongs to the universal ribosomal protein uS3 family.</text>
</comment>
<gene>
    <name evidence="1" type="primary">rpsC</name>
    <name type="ordered locus">SP70585_0271</name>
</gene>
<organism>
    <name type="scientific">Streptococcus pneumoniae (strain 70585)</name>
    <dbReference type="NCBI Taxonomy" id="488221"/>
    <lineage>
        <taxon>Bacteria</taxon>
        <taxon>Bacillati</taxon>
        <taxon>Bacillota</taxon>
        <taxon>Bacilli</taxon>
        <taxon>Lactobacillales</taxon>
        <taxon>Streptococcaceae</taxon>
        <taxon>Streptococcus</taxon>
    </lineage>
</organism>
<feature type="chain" id="PRO_1000165512" description="Small ribosomal subunit protein uS3">
    <location>
        <begin position="1"/>
        <end position="217"/>
    </location>
</feature>
<feature type="domain" description="KH type-2" evidence="1">
    <location>
        <begin position="38"/>
        <end position="106"/>
    </location>
</feature>
<proteinExistence type="inferred from homology"/>